<keyword id="KW-0028">Amino-acid biosynthesis</keyword>
<keyword id="KW-0055">Arginine biosynthesis</keyword>
<keyword id="KW-0963">Cytoplasm</keyword>
<keyword id="KW-0456">Lyase</keyword>
<reference key="1">
    <citation type="journal article" date="2007" name="J. Bacteriol.">
        <title>The complete genome sequence of the lactic acid bacterial paradigm Lactococcus lactis subsp. cremoris MG1363.</title>
        <authorList>
            <person name="Wegmann U."/>
            <person name="O'Connell-Motherway M."/>
            <person name="Zomer A."/>
            <person name="Buist G."/>
            <person name="Shearman C."/>
            <person name="Canchaya C."/>
            <person name="Ventura M."/>
            <person name="Goesmann A."/>
            <person name="Gasson M.J."/>
            <person name="Kuipers O.P."/>
            <person name="van Sinderen D."/>
            <person name="Kok J."/>
        </authorList>
    </citation>
    <scope>NUCLEOTIDE SEQUENCE [LARGE SCALE GENOMIC DNA]</scope>
    <source>
        <strain>MG1363</strain>
    </source>
</reference>
<dbReference type="EC" id="4.3.2.1" evidence="1"/>
<dbReference type="EMBL" id="AM406671">
    <property type="protein sequence ID" value="CAL96746.1"/>
    <property type="molecule type" value="Genomic_DNA"/>
</dbReference>
<dbReference type="RefSeq" id="WP_011834236.1">
    <property type="nucleotide sequence ID" value="NC_009004.1"/>
</dbReference>
<dbReference type="SMR" id="A2RHL0"/>
<dbReference type="STRING" id="416870.llmg_0139"/>
<dbReference type="KEGG" id="llm:llmg_0139"/>
<dbReference type="eggNOG" id="COG0165">
    <property type="taxonomic scope" value="Bacteria"/>
</dbReference>
<dbReference type="HOGENOM" id="CLU_027272_2_3_9"/>
<dbReference type="OrthoDB" id="9769623at2"/>
<dbReference type="PhylomeDB" id="A2RHL0"/>
<dbReference type="UniPathway" id="UPA00068">
    <property type="reaction ID" value="UER00114"/>
</dbReference>
<dbReference type="Proteomes" id="UP000000364">
    <property type="component" value="Chromosome"/>
</dbReference>
<dbReference type="GO" id="GO:0005829">
    <property type="term" value="C:cytosol"/>
    <property type="evidence" value="ECO:0007669"/>
    <property type="project" value="TreeGrafter"/>
</dbReference>
<dbReference type="GO" id="GO:0004056">
    <property type="term" value="F:argininosuccinate lyase activity"/>
    <property type="evidence" value="ECO:0007669"/>
    <property type="project" value="UniProtKB-UniRule"/>
</dbReference>
<dbReference type="GO" id="GO:0042450">
    <property type="term" value="P:arginine biosynthetic process via ornithine"/>
    <property type="evidence" value="ECO:0007669"/>
    <property type="project" value="InterPro"/>
</dbReference>
<dbReference type="GO" id="GO:0006526">
    <property type="term" value="P:L-arginine biosynthetic process"/>
    <property type="evidence" value="ECO:0007669"/>
    <property type="project" value="UniProtKB-UniRule"/>
</dbReference>
<dbReference type="CDD" id="cd01359">
    <property type="entry name" value="Argininosuccinate_lyase"/>
    <property type="match status" value="1"/>
</dbReference>
<dbReference type="FunFam" id="1.10.275.10:FF:000002">
    <property type="entry name" value="Argininosuccinate lyase"/>
    <property type="match status" value="1"/>
</dbReference>
<dbReference type="FunFam" id="1.10.40.30:FF:000001">
    <property type="entry name" value="Argininosuccinate lyase"/>
    <property type="match status" value="1"/>
</dbReference>
<dbReference type="FunFam" id="1.20.200.10:FF:000002">
    <property type="entry name" value="Argininosuccinate lyase"/>
    <property type="match status" value="1"/>
</dbReference>
<dbReference type="Gene3D" id="1.10.40.30">
    <property type="entry name" value="Fumarase/aspartase (C-terminal domain)"/>
    <property type="match status" value="1"/>
</dbReference>
<dbReference type="Gene3D" id="1.20.200.10">
    <property type="entry name" value="Fumarase/aspartase (Central domain)"/>
    <property type="match status" value="1"/>
</dbReference>
<dbReference type="Gene3D" id="1.10.275.10">
    <property type="entry name" value="Fumarase/aspartase (N-terminal domain)"/>
    <property type="match status" value="1"/>
</dbReference>
<dbReference type="HAMAP" id="MF_00006">
    <property type="entry name" value="Arg_succ_lyase"/>
    <property type="match status" value="1"/>
</dbReference>
<dbReference type="InterPro" id="IPR029419">
    <property type="entry name" value="Arg_succ_lyase_C"/>
</dbReference>
<dbReference type="InterPro" id="IPR009049">
    <property type="entry name" value="Argininosuccinate_lyase"/>
</dbReference>
<dbReference type="InterPro" id="IPR024083">
    <property type="entry name" value="Fumarase/histidase_N"/>
</dbReference>
<dbReference type="InterPro" id="IPR020557">
    <property type="entry name" value="Fumarate_lyase_CS"/>
</dbReference>
<dbReference type="InterPro" id="IPR000362">
    <property type="entry name" value="Fumarate_lyase_fam"/>
</dbReference>
<dbReference type="InterPro" id="IPR022761">
    <property type="entry name" value="Fumarate_lyase_N"/>
</dbReference>
<dbReference type="InterPro" id="IPR008948">
    <property type="entry name" value="L-Aspartase-like"/>
</dbReference>
<dbReference type="NCBIfam" id="TIGR00838">
    <property type="entry name" value="argH"/>
    <property type="match status" value="1"/>
</dbReference>
<dbReference type="PANTHER" id="PTHR43814">
    <property type="entry name" value="ARGININOSUCCINATE LYASE"/>
    <property type="match status" value="1"/>
</dbReference>
<dbReference type="PANTHER" id="PTHR43814:SF1">
    <property type="entry name" value="ARGININOSUCCINATE LYASE"/>
    <property type="match status" value="1"/>
</dbReference>
<dbReference type="Pfam" id="PF14698">
    <property type="entry name" value="ASL_C2"/>
    <property type="match status" value="1"/>
</dbReference>
<dbReference type="Pfam" id="PF00206">
    <property type="entry name" value="Lyase_1"/>
    <property type="match status" value="1"/>
</dbReference>
<dbReference type="PRINTS" id="PR00145">
    <property type="entry name" value="ARGSUCLYASE"/>
</dbReference>
<dbReference type="PRINTS" id="PR00149">
    <property type="entry name" value="FUMRATELYASE"/>
</dbReference>
<dbReference type="SUPFAM" id="SSF48557">
    <property type="entry name" value="L-aspartase-like"/>
    <property type="match status" value="1"/>
</dbReference>
<dbReference type="PROSITE" id="PS00163">
    <property type="entry name" value="FUMARATE_LYASES"/>
    <property type="match status" value="1"/>
</dbReference>
<organism>
    <name type="scientific">Lactococcus lactis subsp. cremoris (strain MG1363)</name>
    <dbReference type="NCBI Taxonomy" id="416870"/>
    <lineage>
        <taxon>Bacteria</taxon>
        <taxon>Bacillati</taxon>
        <taxon>Bacillota</taxon>
        <taxon>Bacilli</taxon>
        <taxon>Lactobacillales</taxon>
        <taxon>Streptococcaceae</taxon>
        <taxon>Lactococcus</taxon>
        <taxon>Lactococcus cremoris subsp. cremoris</taxon>
    </lineage>
</organism>
<sequence>MVEKLWGGRFEASLDKQTEEFGASIKFEQRLAPFDLKGSLAHVKMLGETGIITAEEATTIADGLIKVEEKLMKGQIEFKIENEDIHMNMETYLHDEIGPLAGKLHTARSRNDQVATDMHLYLKSVLSDLLKALRTLRETIVNLSVNHVDTLMPGYTHLQHAQPISFAQHLMAYYQMFTRDFERFEFNVKHTDMNPLGAAALAGTTFPIDRELTTNLLQFEKVYANSMDAVSDRDFILEFLSNSSLLMMHLSRLCEELLLWSSHEFNFVSLSDNYSTGSSIMPQKKNPDMAELIRGKSGRVYGNLISLLTVMKGLPLTYNKDLQEDKEGMFDSADTILTSLSVMDGMLSTMTVNRVNMEKATEQDFSNATELADYLAAKGLPFREAHELVGQLVLKCIKKGIYLQEVSLKDYQALSQLIEEDVYEILKSRTAVSRRNSLGGTGFESIKKQIEQAKKELQK</sequence>
<comment type="catalytic activity">
    <reaction evidence="1">
        <text>2-(N(omega)-L-arginino)succinate = fumarate + L-arginine</text>
        <dbReference type="Rhea" id="RHEA:24020"/>
        <dbReference type="ChEBI" id="CHEBI:29806"/>
        <dbReference type="ChEBI" id="CHEBI:32682"/>
        <dbReference type="ChEBI" id="CHEBI:57472"/>
        <dbReference type="EC" id="4.3.2.1"/>
    </reaction>
</comment>
<comment type="pathway">
    <text evidence="1">Amino-acid biosynthesis; L-arginine biosynthesis; L-arginine from L-ornithine and carbamoyl phosphate: step 3/3.</text>
</comment>
<comment type="subcellular location">
    <subcellularLocation>
        <location evidence="1">Cytoplasm</location>
    </subcellularLocation>
</comment>
<comment type="similarity">
    <text evidence="1">Belongs to the lyase 1 family. Argininosuccinate lyase subfamily.</text>
</comment>
<evidence type="ECO:0000255" key="1">
    <source>
        <dbReference type="HAMAP-Rule" id="MF_00006"/>
    </source>
</evidence>
<gene>
    <name evidence="1" type="primary">argH</name>
    <name type="ordered locus">llmg_0139</name>
</gene>
<accession>A2RHL0</accession>
<protein>
    <recommendedName>
        <fullName evidence="1">Argininosuccinate lyase</fullName>
        <shortName evidence="1">ASAL</shortName>
        <ecNumber evidence="1">4.3.2.1</ecNumber>
    </recommendedName>
    <alternativeName>
        <fullName evidence="1">Arginosuccinase</fullName>
    </alternativeName>
</protein>
<proteinExistence type="inferred from homology"/>
<feature type="chain" id="PRO_1000000489" description="Argininosuccinate lyase">
    <location>
        <begin position="1"/>
        <end position="459"/>
    </location>
</feature>
<name>ARLY_LACLM</name>